<name>CH10_DECAR</name>
<proteinExistence type="inferred from homology"/>
<dbReference type="EMBL" id="CP000089">
    <property type="protein sequence ID" value="AAZ45182.1"/>
    <property type="molecule type" value="Genomic_DNA"/>
</dbReference>
<dbReference type="SMR" id="Q47IZ9"/>
<dbReference type="STRING" id="159087.Daro_0425"/>
<dbReference type="KEGG" id="dar:Daro_0425"/>
<dbReference type="eggNOG" id="COG0234">
    <property type="taxonomic scope" value="Bacteria"/>
</dbReference>
<dbReference type="HOGENOM" id="CLU_132825_1_0_4"/>
<dbReference type="OrthoDB" id="9806791at2"/>
<dbReference type="GO" id="GO:0005737">
    <property type="term" value="C:cytoplasm"/>
    <property type="evidence" value="ECO:0007669"/>
    <property type="project" value="UniProtKB-SubCell"/>
</dbReference>
<dbReference type="GO" id="GO:0005524">
    <property type="term" value="F:ATP binding"/>
    <property type="evidence" value="ECO:0007669"/>
    <property type="project" value="InterPro"/>
</dbReference>
<dbReference type="GO" id="GO:0046872">
    <property type="term" value="F:metal ion binding"/>
    <property type="evidence" value="ECO:0007669"/>
    <property type="project" value="TreeGrafter"/>
</dbReference>
<dbReference type="GO" id="GO:0044183">
    <property type="term" value="F:protein folding chaperone"/>
    <property type="evidence" value="ECO:0007669"/>
    <property type="project" value="InterPro"/>
</dbReference>
<dbReference type="GO" id="GO:0051087">
    <property type="term" value="F:protein-folding chaperone binding"/>
    <property type="evidence" value="ECO:0007669"/>
    <property type="project" value="TreeGrafter"/>
</dbReference>
<dbReference type="GO" id="GO:0051082">
    <property type="term" value="F:unfolded protein binding"/>
    <property type="evidence" value="ECO:0007669"/>
    <property type="project" value="TreeGrafter"/>
</dbReference>
<dbReference type="GO" id="GO:0051085">
    <property type="term" value="P:chaperone cofactor-dependent protein refolding"/>
    <property type="evidence" value="ECO:0007669"/>
    <property type="project" value="TreeGrafter"/>
</dbReference>
<dbReference type="CDD" id="cd00320">
    <property type="entry name" value="cpn10"/>
    <property type="match status" value="1"/>
</dbReference>
<dbReference type="FunFam" id="2.30.33.40:FF:000001">
    <property type="entry name" value="10 kDa chaperonin"/>
    <property type="match status" value="1"/>
</dbReference>
<dbReference type="Gene3D" id="2.30.33.40">
    <property type="entry name" value="GroES chaperonin"/>
    <property type="match status" value="1"/>
</dbReference>
<dbReference type="HAMAP" id="MF_00580">
    <property type="entry name" value="CH10"/>
    <property type="match status" value="1"/>
</dbReference>
<dbReference type="InterPro" id="IPR020818">
    <property type="entry name" value="Chaperonin_GroES"/>
</dbReference>
<dbReference type="InterPro" id="IPR037124">
    <property type="entry name" value="Chaperonin_GroES_sf"/>
</dbReference>
<dbReference type="InterPro" id="IPR018369">
    <property type="entry name" value="Chaprnonin_Cpn10_CS"/>
</dbReference>
<dbReference type="InterPro" id="IPR011032">
    <property type="entry name" value="GroES-like_sf"/>
</dbReference>
<dbReference type="NCBIfam" id="NF001527">
    <property type="entry name" value="PRK00364.1-2"/>
    <property type="match status" value="1"/>
</dbReference>
<dbReference type="NCBIfam" id="NF001529">
    <property type="entry name" value="PRK00364.1-5"/>
    <property type="match status" value="1"/>
</dbReference>
<dbReference type="NCBIfam" id="NF001531">
    <property type="entry name" value="PRK00364.2-2"/>
    <property type="match status" value="1"/>
</dbReference>
<dbReference type="NCBIfam" id="NF001533">
    <property type="entry name" value="PRK00364.2-4"/>
    <property type="match status" value="1"/>
</dbReference>
<dbReference type="PANTHER" id="PTHR10772">
    <property type="entry name" value="10 KDA HEAT SHOCK PROTEIN"/>
    <property type="match status" value="1"/>
</dbReference>
<dbReference type="PANTHER" id="PTHR10772:SF58">
    <property type="entry name" value="CO-CHAPERONIN GROES"/>
    <property type="match status" value="1"/>
</dbReference>
<dbReference type="Pfam" id="PF00166">
    <property type="entry name" value="Cpn10"/>
    <property type="match status" value="1"/>
</dbReference>
<dbReference type="PRINTS" id="PR00297">
    <property type="entry name" value="CHAPERONIN10"/>
</dbReference>
<dbReference type="SMART" id="SM00883">
    <property type="entry name" value="Cpn10"/>
    <property type="match status" value="1"/>
</dbReference>
<dbReference type="SUPFAM" id="SSF50129">
    <property type="entry name" value="GroES-like"/>
    <property type="match status" value="1"/>
</dbReference>
<dbReference type="PROSITE" id="PS00681">
    <property type="entry name" value="CHAPERONINS_CPN10"/>
    <property type="match status" value="1"/>
</dbReference>
<feature type="chain" id="PRO_1000025246" description="Co-chaperonin GroES">
    <location>
        <begin position="1"/>
        <end position="96"/>
    </location>
</feature>
<keyword id="KW-0143">Chaperone</keyword>
<keyword id="KW-0963">Cytoplasm</keyword>
<comment type="function">
    <text evidence="1">Together with the chaperonin GroEL, plays an essential role in assisting protein folding. The GroEL-GroES system forms a nano-cage that allows encapsulation of the non-native substrate proteins and provides a physical environment optimized to promote and accelerate protein folding. GroES binds to the apical surface of the GroEL ring, thereby capping the opening of the GroEL channel.</text>
</comment>
<comment type="subunit">
    <text evidence="1">Heptamer of 7 subunits arranged in a ring. Interacts with the chaperonin GroEL.</text>
</comment>
<comment type="subcellular location">
    <subcellularLocation>
        <location evidence="1">Cytoplasm</location>
    </subcellularLocation>
</comment>
<comment type="similarity">
    <text evidence="1">Belongs to the GroES chaperonin family.</text>
</comment>
<sequence length="96" mass="10336">MNIRPLHDRVIVKRVEAERTTASGIVIPDSAGEKPDQGEVLAVGPGKRDDNGKQIALDVKVGDRVLFGKYAGQAVKVDGQEVLVMREEDIMGVLVA</sequence>
<reference key="1">
    <citation type="journal article" date="2009" name="BMC Genomics">
        <title>Metabolic analysis of the soil microbe Dechloromonas aromatica str. RCB: indications of a surprisingly complex life-style and cryptic anaerobic pathways for aromatic degradation.</title>
        <authorList>
            <person name="Salinero K.K."/>
            <person name="Keller K."/>
            <person name="Feil W.S."/>
            <person name="Feil H."/>
            <person name="Trong S."/>
            <person name="Di Bartolo G."/>
            <person name="Lapidus A."/>
        </authorList>
    </citation>
    <scope>NUCLEOTIDE SEQUENCE [LARGE SCALE GENOMIC DNA]</scope>
    <source>
        <strain>RCB</strain>
    </source>
</reference>
<evidence type="ECO:0000255" key="1">
    <source>
        <dbReference type="HAMAP-Rule" id="MF_00580"/>
    </source>
</evidence>
<protein>
    <recommendedName>
        <fullName evidence="1">Co-chaperonin GroES</fullName>
    </recommendedName>
    <alternativeName>
        <fullName evidence="1">10 kDa chaperonin</fullName>
    </alternativeName>
    <alternativeName>
        <fullName evidence="1">Chaperonin-10</fullName>
        <shortName evidence="1">Cpn10</shortName>
    </alternativeName>
</protein>
<organism>
    <name type="scientific">Dechloromonas aromatica (strain RCB)</name>
    <dbReference type="NCBI Taxonomy" id="159087"/>
    <lineage>
        <taxon>Bacteria</taxon>
        <taxon>Pseudomonadati</taxon>
        <taxon>Pseudomonadota</taxon>
        <taxon>Betaproteobacteria</taxon>
        <taxon>Rhodocyclales</taxon>
        <taxon>Azonexaceae</taxon>
        <taxon>Dechloromonas</taxon>
    </lineage>
</organism>
<accession>Q47IZ9</accession>
<gene>
    <name evidence="1" type="primary">groES</name>
    <name evidence="1" type="synonym">groS</name>
    <name type="ordered locus">Daro_0425</name>
</gene>